<keyword id="KW-0007">Acetylation</keyword>
<keyword id="KW-0041">Annexin</keyword>
<keyword id="KW-0106">Calcium</keyword>
<keyword id="KW-0111">Calcium/phospholipid-binding</keyword>
<keyword id="KW-1185">Reference proteome</keyword>
<keyword id="KW-0677">Repeat</keyword>
<sequence>MSYPGYPPTGYPPFPGYPPAGQESSFPTAGQYPYPSGFPPMGGGAYPPAPSGGYPGAGGYPAPGGYPAPGGYPGALSPGGPPAYPGGQGFGAPPGGAGFSGYPQPPAQSYGGGPAQVPVPGGFPGGQMPSQYPGGQAPYPSQPASMTQGTQGTILPASNFDAMRDAEILRKAMKGFGTDEQAIVDVVSNRSNDQRQQIKAAFKTMYGKDLIKDLKSELSGNMEELILALFMPSTYYDAWSLRKAMQGAGTQERVLIEILCTRTNQEIRDIVRCYQLEFGRDLEKDIRSDTSGHFERLLVSMCQGNRDERQSVNHQMAQEDAQRLYQAGEGRLGTDESCFNMILATRSFPQLKATMEAYSRMANRDLLSSVSREFSGYVESGLKTILQCALNRPAFFAERLYYSMKGAGTDDSTLVRIVVTRSEIDLVQIKQMFTQMYQKTLSTMIASDTSGDYRKLLLAIVGQ</sequence>
<comment type="function">
    <text>Calcium/phospholipid-binding protein which promotes membrane fusion and is involved in exocytosis.</text>
</comment>
<comment type="subunit">
    <text evidence="1">Interacts with PDCD6.</text>
</comment>
<comment type="interaction">
    <interactant intactId="EBI-10824194">
        <id>Q07076</id>
    </interactant>
    <interactant intactId="EBI-10816377">
        <id>P05044</id>
        <label>SRI</label>
    </interactant>
    <organismsDiffer>true</organismsDiffer>
    <experiments>2</experiments>
</comment>
<comment type="domain">
    <text>A pair of annexin repeats may form one binding site for calcium and phospholipid.</text>
</comment>
<comment type="similarity">
    <text evidence="3 5">Belongs to the annexin family.</text>
</comment>
<gene>
    <name type="primary">Anxa7</name>
    <name type="synonym">Anx7</name>
</gene>
<organism>
    <name type="scientific">Mus musculus</name>
    <name type="common">Mouse</name>
    <dbReference type="NCBI Taxonomy" id="10090"/>
    <lineage>
        <taxon>Eukaryota</taxon>
        <taxon>Metazoa</taxon>
        <taxon>Chordata</taxon>
        <taxon>Craniata</taxon>
        <taxon>Vertebrata</taxon>
        <taxon>Euteleostomi</taxon>
        <taxon>Mammalia</taxon>
        <taxon>Eutheria</taxon>
        <taxon>Euarchontoglires</taxon>
        <taxon>Glires</taxon>
        <taxon>Rodentia</taxon>
        <taxon>Myomorpha</taxon>
        <taxon>Muroidea</taxon>
        <taxon>Muridae</taxon>
        <taxon>Murinae</taxon>
        <taxon>Mus</taxon>
        <taxon>Mus</taxon>
    </lineage>
</organism>
<dbReference type="EMBL" id="L13129">
    <property type="protein sequence ID" value="AAA37238.1"/>
    <property type="molecule type" value="mRNA"/>
</dbReference>
<dbReference type="EMBL" id="AK151438">
    <property type="protein sequence ID" value="BAE30401.1"/>
    <property type="molecule type" value="mRNA"/>
</dbReference>
<dbReference type="EMBL" id="AK161613">
    <property type="protein sequence ID" value="BAE36492.1"/>
    <property type="molecule type" value="mRNA"/>
</dbReference>
<dbReference type="EMBL" id="AK169199">
    <property type="protein sequence ID" value="BAE40974.1"/>
    <property type="molecule type" value="mRNA"/>
</dbReference>
<dbReference type="EMBL" id="CH466613">
    <property type="protein sequence ID" value="EDL01512.1"/>
    <property type="molecule type" value="Genomic_DNA"/>
</dbReference>
<dbReference type="CCDS" id="CCDS26845.1"/>
<dbReference type="RefSeq" id="NP_001104264.1">
    <property type="nucleotide sequence ID" value="NM_001110794.2"/>
</dbReference>
<dbReference type="RefSeq" id="NP_001409037.1">
    <property type="nucleotide sequence ID" value="NM_001422108.1"/>
</dbReference>
<dbReference type="RefSeq" id="NP_033804.2">
    <property type="nucleotide sequence ID" value="NM_009674.4"/>
</dbReference>
<dbReference type="SMR" id="Q07076"/>
<dbReference type="BioGRID" id="198113">
    <property type="interactions" value="14"/>
</dbReference>
<dbReference type="FunCoup" id="Q07076">
    <property type="interactions" value="2299"/>
</dbReference>
<dbReference type="IntAct" id="Q07076">
    <property type="interactions" value="1"/>
</dbReference>
<dbReference type="STRING" id="10090.ENSMUSP00000066035"/>
<dbReference type="GlyGen" id="Q07076">
    <property type="glycosylation" value="2 sites, 1 N-linked glycan (1 site), 1 O-linked glycan (1 site)"/>
</dbReference>
<dbReference type="iPTMnet" id="Q07076"/>
<dbReference type="PhosphoSitePlus" id="Q07076"/>
<dbReference type="SwissPalm" id="Q07076"/>
<dbReference type="REPRODUCTION-2DPAGE" id="Q07076"/>
<dbReference type="jPOST" id="Q07076"/>
<dbReference type="PaxDb" id="10090-ENSMUSP00000098405"/>
<dbReference type="PeptideAtlas" id="Q07076"/>
<dbReference type="ProteomicsDB" id="296319"/>
<dbReference type="Antibodypedia" id="3809">
    <property type="antibodies" value="354 antibodies from 37 providers"/>
</dbReference>
<dbReference type="DNASU" id="11750"/>
<dbReference type="Ensembl" id="ENSMUST00000065504.17">
    <property type="protein sequence ID" value="ENSMUSP00000066035.10"/>
    <property type="gene ID" value="ENSMUSG00000021814.18"/>
</dbReference>
<dbReference type="Ensembl" id="ENSMUST00000224975.2">
    <property type="protein sequence ID" value="ENSMUSP00000153669.2"/>
    <property type="gene ID" value="ENSMUSG00000021814.18"/>
</dbReference>
<dbReference type="GeneID" id="11750"/>
<dbReference type="KEGG" id="mmu:11750"/>
<dbReference type="UCSC" id="uc007sjr.2">
    <property type="organism name" value="mouse"/>
</dbReference>
<dbReference type="AGR" id="MGI:88031"/>
<dbReference type="CTD" id="310"/>
<dbReference type="MGI" id="MGI:88031">
    <property type="gene designation" value="Anxa7"/>
</dbReference>
<dbReference type="VEuPathDB" id="HostDB:ENSMUSG00000021814"/>
<dbReference type="eggNOG" id="KOG0819">
    <property type="taxonomic scope" value="Eukaryota"/>
</dbReference>
<dbReference type="GeneTree" id="ENSGT00940000155278"/>
<dbReference type="HOGENOM" id="CLU_025300_6_1_1"/>
<dbReference type="InParanoid" id="Q07076"/>
<dbReference type="OMA" id="VRGPLMQ"/>
<dbReference type="OrthoDB" id="37886at2759"/>
<dbReference type="PhylomeDB" id="Q07076"/>
<dbReference type="TreeFam" id="TF105452"/>
<dbReference type="BioGRID-ORCS" id="11750">
    <property type="hits" value="1 hit in 77 CRISPR screens"/>
</dbReference>
<dbReference type="ChiTaRS" id="Anxa7">
    <property type="organism name" value="mouse"/>
</dbReference>
<dbReference type="PRO" id="PR:Q07076"/>
<dbReference type="Proteomes" id="UP000000589">
    <property type="component" value="Chromosome 14"/>
</dbReference>
<dbReference type="RNAct" id="Q07076">
    <property type="molecule type" value="protein"/>
</dbReference>
<dbReference type="Bgee" id="ENSMUSG00000021814">
    <property type="expression patterns" value="Expressed in tail skin and 246 other cell types or tissues"/>
</dbReference>
<dbReference type="ExpressionAtlas" id="Q07076">
    <property type="expression patterns" value="baseline and differential"/>
</dbReference>
<dbReference type="GO" id="GO:0062023">
    <property type="term" value="C:collagen-containing extracellular matrix"/>
    <property type="evidence" value="ECO:0007005"/>
    <property type="project" value="BHF-UCL"/>
</dbReference>
<dbReference type="GO" id="GO:0005829">
    <property type="term" value="C:cytosol"/>
    <property type="evidence" value="ECO:0000314"/>
    <property type="project" value="MGI"/>
</dbReference>
<dbReference type="GO" id="GO:0005635">
    <property type="term" value="C:nuclear envelope"/>
    <property type="evidence" value="ECO:0000314"/>
    <property type="project" value="MGI"/>
</dbReference>
<dbReference type="GO" id="GO:0005634">
    <property type="term" value="C:nucleus"/>
    <property type="evidence" value="ECO:0000314"/>
    <property type="project" value="MGI"/>
</dbReference>
<dbReference type="GO" id="GO:0005886">
    <property type="term" value="C:plasma membrane"/>
    <property type="evidence" value="ECO:0000314"/>
    <property type="project" value="MGI"/>
</dbReference>
<dbReference type="GO" id="GO:0045202">
    <property type="term" value="C:synapse"/>
    <property type="evidence" value="ECO:0007669"/>
    <property type="project" value="GOC"/>
</dbReference>
<dbReference type="GO" id="GO:0031982">
    <property type="term" value="C:vesicle"/>
    <property type="evidence" value="ECO:0000314"/>
    <property type="project" value="MGI"/>
</dbReference>
<dbReference type="GO" id="GO:0005509">
    <property type="term" value="F:calcium ion binding"/>
    <property type="evidence" value="ECO:0007669"/>
    <property type="project" value="InterPro"/>
</dbReference>
<dbReference type="GO" id="GO:0005544">
    <property type="term" value="F:calcium-dependent phospholipid binding"/>
    <property type="evidence" value="ECO:0007669"/>
    <property type="project" value="UniProtKB-KW"/>
</dbReference>
<dbReference type="GO" id="GO:0140523">
    <property type="term" value="F:GTPase-dependent fusogenic activity"/>
    <property type="evidence" value="ECO:0000315"/>
    <property type="project" value="MGI"/>
</dbReference>
<dbReference type="GO" id="GO:0051649">
    <property type="term" value="P:establishment of localization in cell"/>
    <property type="evidence" value="ECO:0000316"/>
    <property type="project" value="MGI"/>
</dbReference>
<dbReference type="GO" id="GO:0014009">
    <property type="term" value="P:glial cell proliferation"/>
    <property type="evidence" value="ECO:0000315"/>
    <property type="project" value="MGI"/>
</dbReference>
<dbReference type="GO" id="GO:0007599">
    <property type="term" value="P:hemostasis"/>
    <property type="evidence" value="ECO:0000315"/>
    <property type="project" value="MGI"/>
</dbReference>
<dbReference type="GO" id="GO:0030073">
    <property type="term" value="P:insulin secretion"/>
    <property type="evidence" value="ECO:0000316"/>
    <property type="project" value="MGI"/>
</dbReference>
<dbReference type="GO" id="GO:0006874">
    <property type="term" value="P:intracellular calcium ion homeostasis"/>
    <property type="evidence" value="ECO:0000315"/>
    <property type="project" value="MGI"/>
</dbReference>
<dbReference type="GO" id="GO:0009992">
    <property type="term" value="P:intracellular water homeostasis"/>
    <property type="evidence" value="ECO:0000315"/>
    <property type="project" value="MGI"/>
</dbReference>
<dbReference type="GO" id="GO:1990806">
    <property type="term" value="P:ligand-gated ion channel signaling pathway"/>
    <property type="evidence" value="ECO:0000315"/>
    <property type="project" value="MGI"/>
</dbReference>
<dbReference type="GO" id="GO:0007207">
    <property type="term" value="P:phospholipase C-activating G protein-coupled acetylcholine receptor signaling pathway"/>
    <property type="evidence" value="ECO:0000315"/>
    <property type="project" value="MGI"/>
</dbReference>
<dbReference type="GO" id="GO:0032024">
    <property type="term" value="P:positive regulation of insulin secretion"/>
    <property type="evidence" value="ECO:0000315"/>
    <property type="project" value="MGI"/>
</dbReference>
<dbReference type="GO" id="GO:0008360">
    <property type="term" value="P:regulation of cell shape"/>
    <property type="evidence" value="ECO:0000315"/>
    <property type="project" value="MGI"/>
</dbReference>
<dbReference type="GO" id="GO:0009651">
    <property type="term" value="P:response to salt stress"/>
    <property type="evidence" value="ECO:0000315"/>
    <property type="project" value="MGI"/>
</dbReference>
<dbReference type="FunFam" id="1.10.220.10:FF:000001">
    <property type="entry name" value="Annexin"/>
    <property type="match status" value="1"/>
</dbReference>
<dbReference type="FunFam" id="1.10.220.10:FF:000002">
    <property type="entry name" value="Annexin"/>
    <property type="match status" value="1"/>
</dbReference>
<dbReference type="FunFam" id="1.10.220.10:FF:000003">
    <property type="entry name" value="Annexin"/>
    <property type="match status" value="1"/>
</dbReference>
<dbReference type="FunFam" id="1.10.220.10:FF:000004">
    <property type="entry name" value="Annexin"/>
    <property type="match status" value="1"/>
</dbReference>
<dbReference type="Gene3D" id="1.10.220.10">
    <property type="entry name" value="Annexin"/>
    <property type="match status" value="4"/>
</dbReference>
<dbReference type="InterPro" id="IPR001464">
    <property type="entry name" value="Annexin"/>
</dbReference>
<dbReference type="InterPro" id="IPR018502">
    <property type="entry name" value="Annexin_repeat"/>
</dbReference>
<dbReference type="InterPro" id="IPR018252">
    <property type="entry name" value="Annexin_repeat_CS"/>
</dbReference>
<dbReference type="InterPro" id="IPR037104">
    <property type="entry name" value="Annexin_sf"/>
</dbReference>
<dbReference type="PANTHER" id="PTHR10502">
    <property type="entry name" value="ANNEXIN"/>
    <property type="match status" value="1"/>
</dbReference>
<dbReference type="PANTHER" id="PTHR10502:SF239">
    <property type="entry name" value="ANNEXIN A7"/>
    <property type="match status" value="1"/>
</dbReference>
<dbReference type="Pfam" id="PF00191">
    <property type="entry name" value="Annexin"/>
    <property type="match status" value="4"/>
</dbReference>
<dbReference type="PRINTS" id="PR00196">
    <property type="entry name" value="ANNEXIN"/>
</dbReference>
<dbReference type="PRINTS" id="PR01871">
    <property type="entry name" value="ANNEXINVII"/>
</dbReference>
<dbReference type="SMART" id="SM00335">
    <property type="entry name" value="ANX"/>
    <property type="match status" value="4"/>
</dbReference>
<dbReference type="SUPFAM" id="SSF47874">
    <property type="entry name" value="Annexin"/>
    <property type="match status" value="1"/>
</dbReference>
<dbReference type="PROSITE" id="PS00223">
    <property type="entry name" value="ANNEXIN_1"/>
    <property type="match status" value="4"/>
</dbReference>
<dbReference type="PROSITE" id="PS51897">
    <property type="entry name" value="ANNEXIN_2"/>
    <property type="match status" value="4"/>
</dbReference>
<reference key="1">
    <citation type="journal article" date="1993" name="Biochem. J.">
        <title>Mouse synexin (annexin VII) polymorphisms and a phylogenetic comparison with other synexins.</title>
        <authorList>
            <person name="Zhang-Keck Z.Y."/>
            <person name="Burns A.L."/>
            <person name="Pollard H.B."/>
        </authorList>
    </citation>
    <scope>NUCLEOTIDE SEQUENCE [MRNA]</scope>
</reference>
<reference key="2">
    <citation type="journal article" date="2005" name="Science">
        <title>The transcriptional landscape of the mammalian genome.</title>
        <authorList>
            <person name="Carninci P."/>
            <person name="Kasukawa T."/>
            <person name="Katayama S."/>
            <person name="Gough J."/>
            <person name="Frith M.C."/>
            <person name="Maeda N."/>
            <person name="Oyama R."/>
            <person name="Ravasi T."/>
            <person name="Lenhard B."/>
            <person name="Wells C."/>
            <person name="Kodzius R."/>
            <person name="Shimokawa K."/>
            <person name="Bajic V.B."/>
            <person name="Brenner S.E."/>
            <person name="Batalov S."/>
            <person name="Forrest A.R."/>
            <person name="Zavolan M."/>
            <person name="Davis M.J."/>
            <person name="Wilming L.G."/>
            <person name="Aidinis V."/>
            <person name="Allen J.E."/>
            <person name="Ambesi-Impiombato A."/>
            <person name="Apweiler R."/>
            <person name="Aturaliya R.N."/>
            <person name="Bailey T.L."/>
            <person name="Bansal M."/>
            <person name="Baxter L."/>
            <person name="Beisel K.W."/>
            <person name="Bersano T."/>
            <person name="Bono H."/>
            <person name="Chalk A.M."/>
            <person name="Chiu K.P."/>
            <person name="Choudhary V."/>
            <person name="Christoffels A."/>
            <person name="Clutterbuck D.R."/>
            <person name="Crowe M.L."/>
            <person name="Dalla E."/>
            <person name="Dalrymple B.P."/>
            <person name="de Bono B."/>
            <person name="Della Gatta G."/>
            <person name="di Bernardo D."/>
            <person name="Down T."/>
            <person name="Engstrom P."/>
            <person name="Fagiolini M."/>
            <person name="Faulkner G."/>
            <person name="Fletcher C.F."/>
            <person name="Fukushima T."/>
            <person name="Furuno M."/>
            <person name="Futaki S."/>
            <person name="Gariboldi M."/>
            <person name="Georgii-Hemming P."/>
            <person name="Gingeras T.R."/>
            <person name="Gojobori T."/>
            <person name="Green R.E."/>
            <person name="Gustincich S."/>
            <person name="Harbers M."/>
            <person name="Hayashi Y."/>
            <person name="Hensch T.K."/>
            <person name="Hirokawa N."/>
            <person name="Hill D."/>
            <person name="Huminiecki L."/>
            <person name="Iacono M."/>
            <person name="Ikeo K."/>
            <person name="Iwama A."/>
            <person name="Ishikawa T."/>
            <person name="Jakt M."/>
            <person name="Kanapin A."/>
            <person name="Katoh M."/>
            <person name="Kawasawa Y."/>
            <person name="Kelso J."/>
            <person name="Kitamura H."/>
            <person name="Kitano H."/>
            <person name="Kollias G."/>
            <person name="Krishnan S.P."/>
            <person name="Kruger A."/>
            <person name="Kummerfeld S.K."/>
            <person name="Kurochkin I.V."/>
            <person name="Lareau L.F."/>
            <person name="Lazarevic D."/>
            <person name="Lipovich L."/>
            <person name="Liu J."/>
            <person name="Liuni S."/>
            <person name="McWilliam S."/>
            <person name="Madan Babu M."/>
            <person name="Madera M."/>
            <person name="Marchionni L."/>
            <person name="Matsuda H."/>
            <person name="Matsuzawa S."/>
            <person name="Miki H."/>
            <person name="Mignone F."/>
            <person name="Miyake S."/>
            <person name="Morris K."/>
            <person name="Mottagui-Tabar S."/>
            <person name="Mulder N."/>
            <person name="Nakano N."/>
            <person name="Nakauchi H."/>
            <person name="Ng P."/>
            <person name="Nilsson R."/>
            <person name="Nishiguchi S."/>
            <person name="Nishikawa S."/>
            <person name="Nori F."/>
            <person name="Ohara O."/>
            <person name="Okazaki Y."/>
            <person name="Orlando V."/>
            <person name="Pang K.C."/>
            <person name="Pavan W.J."/>
            <person name="Pavesi G."/>
            <person name="Pesole G."/>
            <person name="Petrovsky N."/>
            <person name="Piazza S."/>
            <person name="Reed J."/>
            <person name="Reid J.F."/>
            <person name="Ring B.Z."/>
            <person name="Ringwald M."/>
            <person name="Rost B."/>
            <person name="Ruan Y."/>
            <person name="Salzberg S.L."/>
            <person name="Sandelin A."/>
            <person name="Schneider C."/>
            <person name="Schoenbach C."/>
            <person name="Sekiguchi K."/>
            <person name="Semple C.A."/>
            <person name="Seno S."/>
            <person name="Sessa L."/>
            <person name="Sheng Y."/>
            <person name="Shibata Y."/>
            <person name="Shimada H."/>
            <person name="Shimada K."/>
            <person name="Silva D."/>
            <person name="Sinclair B."/>
            <person name="Sperling S."/>
            <person name="Stupka E."/>
            <person name="Sugiura K."/>
            <person name="Sultana R."/>
            <person name="Takenaka Y."/>
            <person name="Taki K."/>
            <person name="Tammoja K."/>
            <person name="Tan S.L."/>
            <person name="Tang S."/>
            <person name="Taylor M.S."/>
            <person name="Tegner J."/>
            <person name="Teichmann S.A."/>
            <person name="Ueda H.R."/>
            <person name="van Nimwegen E."/>
            <person name="Verardo R."/>
            <person name="Wei C.L."/>
            <person name="Yagi K."/>
            <person name="Yamanishi H."/>
            <person name="Zabarovsky E."/>
            <person name="Zhu S."/>
            <person name="Zimmer A."/>
            <person name="Hide W."/>
            <person name="Bult C."/>
            <person name="Grimmond S.M."/>
            <person name="Teasdale R.D."/>
            <person name="Liu E.T."/>
            <person name="Brusic V."/>
            <person name="Quackenbush J."/>
            <person name="Wahlestedt C."/>
            <person name="Mattick J.S."/>
            <person name="Hume D.A."/>
            <person name="Kai C."/>
            <person name="Sasaki D."/>
            <person name="Tomaru Y."/>
            <person name="Fukuda S."/>
            <person name="Kanamori-Katayama M."/>
            <person name="Suzuki M."/>
            <person name="Aoki J."/>
            <person name="Arakawa T."/>
            <person name="Iida J."/>
            <person name="Imamura K."/>
            <person name="Itoh M."/>
            <person name="Kato T."/>
            <person name="Kawaji H."/>
            <person name="Kawagashira N."/>
            <person name="Kawashima T."/>
            <person name="Kojima M."/>
            <person name="Kondo S."/>
            <person name="Konno H."/>
            <person name="Nakano K."/>
            <person name="Ninomiya N."/>
            <person name="Nishio T."/>
            <person name="Okada M."/>
            <person name="Plessy C."/>
            <person name="Shibata K."/>
            <person name="Shiraki T."/>
            <person name="Suzuki S."/>
            <person name="Tagami M."/>
            <person name="Waki K."/>
            <person name="Watahiki A."/>
            <person name="Okamura-Oho Y."/>
            <person name="Suzuki H."/>
            <person name="Kawai J."/>
            <person name="Hayashizaki Y."/>
        </authorList>
    </citation>
    <scope>NUCLEOTIDE SEQUENCE [LARGE SCALE MRNA]</scope>
    <source>
        <strain>C57BL/6J</strain>
        <tissue>Bone marrow</tissue>
        <tissue>Embryo</tissue>
        <tissue>Heart</tissue>
    </source>
</reference>
<reference key="3">
    <citation type="submission" date="2005-09" db="EMBL/GenBank/DDBJ databases">
        <authorList>
            <person name="Mural R.J."/>
            <person name="Adams M.D."/>
            <person name="Myers E.W."/>
            <person name="Smith H.O."/>
            <person name="Venter J.C."/>
        </authorList>
    </citation>
    <scope>NUCLEOTIDE SEQUENCE [LARGE SCALE GENOMIC DNA]</scope>
</reference>
<reference key="4">
    <citation type="journal article" date="2010" name="Cell">
        <title>A tissue-specific atlas of mouse protein phosphorylation and expression.</title>
        <authorList>
            <person name="Huttlin E.L."/>
            <person name="Jedrychowski M.P."/>
            <person name="Elias J.E."/>
            <person name="Goswami T."/>
            <person name="Rad R."/>
            <person name="Beausoleil S.A."/>
            <person name="Villen J."/>
            <person name="Haas W."/>
            <person name="Sowa M.E."/>
            <person name="Gygi S.P."/>
        </authorList>
    </citation>
    <scope>IDENTIFICATION BY MASS SPECTROMETRY [LARGE SCALE ANALYSIS]</scope>
    <source>
        <tissue>Brain</tissue>
        <tissue>Brown adipose tissue</tissue>
        <tissue>Heart</tissue>
        <tissue>Kidney</tissue>
        <tissue>Liver</tissue>
        <tissue>Lung</tissue>
        <tissue>Pancreas</tissue>
        <tissue>Spleen</tissue>
        <tissue>Testis</tissue>
    </source>
</reference>
<protein>
    <recommendedName>
        <fullName>Annexin A7</fullName>
    </recommendedName>
    <alternativeName>
        <fullName>Annexin VII</fullName>
    </alternativeName>
    <alternativeName>
        <fullName>Annexin-7</fullName>
    </alternativeName>
    <alternativeName>
        <fullName>Synexin</fullName>
    </alternativeName>
</protein>
<proteinExistence type="evidence at protein level"/>
<name>ANXA7_MOUSE</name>
<feature type="chain" id="PRO_0000067500" description="Annexin A7">
    <location>
        <begin position="1"/>
        <end position="463"/>
    </location>
</feature>
<feature type="repeat" description="Annexin 1" evidence="3">
    <location>
        <begin position="160"/>
        <end position="231"/>
    </location>
</feature>
<feature type="repeat" description="Annexin 2" evidence="3">
    <location>
        <begin position="232"/>
        <end position="303"/>
    </location>
</feature>
<feature type="repeat" description="Annexin 3" evidence="3">
    <location>
        <begin position="315"/>
        <end position="387"/>
    </location>
</feature>
<feature type="repeat" description="Annexin 4" evidence="3">
    <location>
        <begin position="391"/>
        <end position="462"/>
    </location>
</feature>
<feature type="region of interest" description="Repeat-rich region">
    <location>
        <begin position="1"/>
        <end position="143"/>
    </location>
</feature>
<feature type="region of interest" description="Disordered" evidence="4">
    <location>
        <begin position="1"/>
        <end position="34"/>
    </location>
</feature>
<feature type="region of interest" description="3 X 5 AA tandem repeats of G-Y-P-P-X">
    <location>
        <begin position="5"/>
        <end position="20"/>
    </location>
</feature>
<feature type="region of interest" description="Disordered" evidence="4">
    <location>
        <begin position="77"/>
        <end position="149"/>
    </location>
</feature>
<feature type="compositionally biased region" description="Pro residues" evidence="4">
    <location>
        <begin position="1"/>
        <end position="18"/>
    </location>
</feature>
<feature type="compositionally biased region" description="Gly residues" evidence="4">
    <location>
        <begin position="86"/>
        <end position="99"/>
    </location>
</feature>
<feature type="modified residue" description="N6-acetyllysine" evidence="2">
    <location>
        <position position="208"/>
    </location>
</feature>
<feature type="sequence conflict" description="In Ref. 1; AAA37238." evidence="5" ref="1">
    <original>G</original>
    <variation>A</variation>
    <location>
        <position position="304"/>
    </location>
</feature>
<evidence type="ECO:0000250" key="1"/>
<evidence type="ECO:0000250" key="2">
    <source>
        <dbReference type="UniProtKB" id="P20073"/>
    </source>
</evidence>
<evidence type="ECO:0000255" key="3">
    <source>
        <dbReference type="PROSITE-ProRule" id="PRU01245"/>
    </source>
</evidence>
<evidence type="ECO:0000256" key="4">
    <source>
        <dbReference type="SAM" id="MobiDB-lite"/>
    </source>
</evidence>
<evidence type="ECO:0000305" key="5"/>
<accession>Q07076</accession>
<accession>Q3TT33</accession>